<keyword id="KW-1015">Disulfide bond</keyword>
<keyword id="KW-0872">Ion channel impairing toxin</keyword>
<keyword id="KW-0528">Neurotoxin</keyword>
<keyword id="KW-0632">Potassium channel impairing toxin</keyword>
<keyword id="KW-0964">Secreted</keyword>
<keyword id="KW-0732">Signal</keyword>
<keyword id="KW-0800">Toxin</keyword>
<keyword id="KW-1220">Voltage-gated potassium channel impairing toxin</keyword>
<dbReference type="EMBL" id="FJ360827">
    <property type="protein sequence ID" value="ACJ23147.1"/>
    <property type="molecule type" value="mRNA"/>
</dbReference>
<dbReference type="SMR" id="B8XH38"/>
<dbReference type="GO" id="GO:0005576">
    <property type="term" value="C:extracellular region"/>
    <property type="evidence" value="ECO:0007669"/>
    <property type="project" value="UniProtKB-SubCell"/>
</dbReference>
<dbReference type="GO" id="GO:0008200">
    <property type="term" value="F:ion channel inhibitor activity"/>
    <property type="evidence" value="ECO:0007669"/>
    <property type="project" value="InterPro"/>
</dbReference>
<dbReference type="GO" id="GO:0015459">
    <property type="term" value="F:potassium channel regulator activity"/>
    <property type="evidence" value="ECO:0007669"/>
    <property type="project" value="UniProtKB-KW"/>
</dbReference>
<dbReference type="GO" id="GO:0090729">
    <property type="term" value="F:toxin activity"/>
    <property type="evidence" value="ECO:0007669"/>
    <property type="project" value="UniProtKB-KW"/>
</dbReference>
<dbReference type="Gene3D" id="3.30.30.10">
    <property type="entry name" value="Knottin, scorpion toxin-like"/>
    <property type="match status" value="1"/>
</dbReference>
<dbReference type="InterPro" id="IPR036574">
    <property type="entry name" value="Scorpion_toxin-like_sf"/>
</dbReference>
<dbReference type="InterPro" id="IPR001947">
    <property type="entry name" value="Scorpion_toxinS_K_inh"/>
</dbReference>
<dbReference type="Pfam" id="PF00451">
    <property type="entry name" value="Toxin_2"/>
    <property type="match status" value="1"/>
</dbReference>
<dbReference type="SUPFAM" id="SSF57095">
    <property type="entry name" value="Scorpion toxin-like"/>
    <property type="match status" value="1"/>
</dbReference>
<dbReference type="PROSITE" id="PS01138">
    <property type="entry name" value="SCORP_SHORT_TOXIN"/>
    <property type="match status" value="1"/>
</dbReference>
<reference key="1">
    <citation type="submission" date="2008-10" db="EMBL/GenBank/DDBJ databases">
        <title>Buthus occitanus israelis scorpion toxin.</title>
        <authorList>
            <person name="Zilberberg N."/>
            <person name="Kozminsky-Atias A."/>
        </authorList>
    </citation>
    <scope>NUCLEOTIDE SEQUENCE [MRNA]</scope>
    <source>
        <tissue>Venom gland</tissue>
    </source>
</reference>
<reference key="2">
    <citation type="journal article" date="2018" name="Nat. Struct. Mol. Biol.">
        <title>Screening, large-scale production and structure-based classification of cystine-dense peptides.</title>
        <authorList>
            <person name="Correnti C.E."/>
            <person name="Gewe M.M."/>
            <person name="Mehlin C."/>
            <person name="Bandaranayake A.D."/>
            <person name="Johnsen W.A."/>
            <person name="Rupert P.B."/>
            <person name="Brusniak M.Y."/>
            <person name="Clarke M."/>
            <person name="Burke S.E."/>
            <person name="De Van Der Schueren W."/>
            <person name="Pilat K."/>
            <person name="Turnbaugh S.M."/>
            <person name="May D."/>
            <person name="Watson A."/>
            <person name="Chan M.K."/>
            <person name="Bahl C.D."/>
            <person name="Olson J.M."/>
            <person name="Strong R.K."/>
        </authorList>
    </citation>
    <scope>FUNCTION</scope>
    <scope>SYNTHESIS OF 23-60</scope>
</reference>
<feature type="signal peptide" evidence="2">
    <location>
        <begin position="1"/>
        <end position="22"/>
    </location>
</feature>
<feature type="chain" id="PRO_0000405977" description="Potassium channel toxin-like Tx677">
    <location>
        <begin position="23"/>
        <end position="60"/>
    </location>
</feature>
<feature type="site" description="Basic residue of the functional dyad" evidence="1">
    <location>
        <position position="50"/>
    </location>
</feature>
<feature type="site" description="Aromatic residue of the functional dyad" evidence="1">
    <location>
        <position position="59"/>
    </location>
</feature>
<feature type="disulfide bond" evidence="1">
    <location>
        <begin position="30"/>
        <end position="51"/>
    </location>
</feature>
<feature type="disulfide bond" evidence="1">
    <location>
        <begin position="36"/>
        <end position="56"/>
    </location>
</feature>
<feature type="disulfide bond" evidence="1">
    <location>
        <begin position="40"/>
        <end position="58"/>
    </location>
</feature>
<protein>
    <recommendedName>
        <fullName evidence="6">Potassium channel toxin-like Tx677</fullName>
    </recommendedName>
    <alternativeName>
        <fullName evidence="4">Potassium channel toxin alpha-KTx</fullName>
    </alternativeName>
</protein>
<accession>B8XH38</accession>
<comment type="function">
    <text evidence="3">Weakly inhibits Kv11.1/KCNH2/ERG1, Kv1.2/KCNA2 and Kv1.3/KCNA3 voltage-gated potassium channels.</text>
</comment>
<comment type="subcellular location">
    <subcellularLocation>
        <location evidence="5">Secreted</location>
    </subcellularLocation>
</comment>
<comment type="tissue specificity">
    <text evidence="5">Expressed by the venom gland.</text>
</comment>
<comment type="similarity">
    <text evidence="4">Belongs to the short scorpion toxin superfamily. Potassium channel inhibitor family.</text>
</comment>
<name>KAX_BUTIS</name>
<organism>
    <name type="scientific">Buthus israelis</name>
    <name type="common">Israeli scorpion</name>
    <name type="synonym">Buthus occitanus israelis</name>
    <dbReference type="NCBI Taxonomy" id="2899555"/>
    <lineage>
        <taxon>Eukaryota</taxon>
        <taxon>Metazoa</taxon>
        <taxon>Ecdysozoa</taxon>
        <taxon>Arthropoda</taxon>
        <taxon>Chelicerata</taxon>
        <taxon>Arachnida</taxon>
        <taxon>Scorpiones</taxon>
        <taxon>Buthida</taxon>
        <taxon>Buthoidea</taxon>
        <taxon>Buthidae</taxon>
        <taxon>Buthus</taxon>
    </lineage>
</organism>
<proteinExistence type="inferred from homology"/>
<sequence length="60" mass="6800">MKISALVMITLLICSMMILCQGQKILSNRCNNSSECIPHCIRIFGTRAAKCINRKCYCYP</sequence>
<evidence type="ECO:0000250" key="1"/>
<evidence type="ECO:0000255" key="2"/>
<evidence type="ECO:0000269" key="3">
    <source>
    </source>
</evidence>
<evidence type="ECO:0000305" key="4"/>
<evidence type="ECO:0000305" key="5">
    <source ref="1"/>
</evidence>
<evidence type="ECO:0000312" key="6">
    <source>
        <dbReference type="EMBL" id="ACJ23147.1"/>
    </source>
</evidence>